<feature type="chain" id="PRO_0000099059" description="Tryptophan synthase beta chain">
    <location>
        <begin position="1"/>
        <end position="424"/>
    </location>
</feature>
<feature type="modified residue" description="N6-(pyridoxal phosphate)lysine" evidence="1">
    <location>
        <position position="108"/>
    </location>
</feature>
<gene>
    <name type="primary">trpB</name>
    <name type="ordered locus">Ta0669</name>
</gene>
<reference key="1">
    <citation type="journal article" date="2000" name="Nature">
        <title>The genome sequence of the thermoacidophilic scavenger Thermoplasma acidophilum.</title>
        <authorList>
            <person name="Ruepp A."/>
            <person name="Graml W."/>
            <person name="Santos-Martinez M.-L."/>
            <person name="Koretke K.K."/>
            <person name="Volker C."/>
            <person name="Mewes H.-W."/>
            <person name="Frishman D."/>
            <person name="Stocker S."/>
            <person name="Lupas A.N."/>
            <person name="Baumeister W."/>
        </authorList>
    </citation>
    <scope>NUCLEOTIDE SEQUENCE [LARGE SCALE GENOMIC DNA]</scope>
    <source>
        <strain>ATCC 25905 / DSM 1728 / JCM 9062 / NBRC 15155 / AMRC-C165</strain>
    </source>
</reference>
<organism>
    <name type="scientific">Thermoplasma acidophilum (strain ATCC 25905 / DSM 1728 / JCM 9062 / NBRC 15155 / AMRC-C165)</name>
    <dbReference type="NCBI Taxonomy" id="273075"/>
    <lineage>
        <taxon>Archaea</taxon>
        <taxon>Methanobacteriati</taxon>
        <taxon>Thermoplasmatota</taxon>
        <taxon>Thermoplasmata</taxon>
        <taxon>Thermoplasmatales</taxon>
        <taxon>Thermoplasmataceae</taxon>
        <taxon>Thermoplasma</taxon>
    </lineage>
</organism>
<evidence type="ECO:0000250" key="1"/>
<evidence type="ECO:0000305" key="2"/>
<proteinExistence type="inferred from homology"/>
<comment type="function">
    <text evidence="1">The beta subunit is responsible for the synthesis of L-tryptophan from indole and L-serine.</text>
</comment>
<comment type="catalytic activity">
    <reaction>
        <text>(1S,2R)-1-C-(indol-3-yl)glycerol 3-phosphate + L-serine = D-glyceraldehyde 3-phosphate + L-tryptophan + H2O</text>
        <dbReference type="Rhea" id="RHEA:10532"/>
        <dbReference type="ChEBI" id="CHEBI:15377"/>
        <dbReference type="ChEBI" id="CHEBI:33384"/>
        <dbReference type="ChEBI" id="CHEBI:57912"/>
        <dbReference type="ChEBI" id="CHEBI:58866"/>
        <dbReference type="ChEBI" id="CHEBI:59776"/>
        <dbReference type="EC" id="4.2.1.20"/>
    </reaction>
</comment>
<comment type="cofactor">
    <cofactor evidence="1">
        <name>pyridoxal 5'-phosphate</name>
        <dbReference type="ChEBI" id="CHEBI:597326"/>
    </cofactor>
</comment>
<comment type="pathway">
    <text>Amino-acid biosynthesis; L-tryptophan biosynthesis; L-tryptophan from chorismate: step 5/5.</text>
</comment>
<comment type="subunit">
    <text evidence="1">Tetramer of two alpha and two beta chains.</text>
</comment>
<comment type="similarity">
    <text evidence="2">Belongs to the TrpB family.</text>
</comment>
<protein>
    <recommendedName>
        <fullName>Tryptophan synthase beta chain</fullName>
        <ecNumber>4.2.1.20</ecNumber>
    </recommendedName>
</protein>
<dbReference type="EC" id="4.2.1.20"/>
<dbReference type="EMBL" id="AL445065">
    <property type="protein sequence ID" value="CAC11807.1"/>
    <property type="molecule type" value="Genomic_DNA"/>
</dbReference>
<dbReference type="RefSeq" id="WP_010901091.1">
    <property type="nucleotide sequence ID" value="NC_002578.1"/>
</dbReference>
<dbReference type="SMR" id="Q9HKD2"/>
<dbReference type="FunCoup" id="Q9HKD2">
    <property type="interactions" value="127"/>
</dbReference>
<dbReference type="STRING" id="273075.gene:9571889"/>
<dbReference type="PaxDb" id="273075-Ta0669"/>
<dbReference type="EnsemblBacteria" id="CAC11807">
    <property type="protein sequence ID" value="CAC11807"/>
    <property type="gene ID" value="CAC11807"/>
</dbReference>
<dbReference type="KEGG" id="tac:Ta0669"/>
<dbReference type="eggNOG" id="arCOG01432">
    <property type="taxonomic scope" value="Archaea"/>
</dbReference>
<dbReference type="HOGENOM" id="CLU_042858_1_0_2"/>
<dbReference type="InParanoid" id="Q9HKD2"/>
<dbReference type="OrthoDB" id="371827at2157"/>
<dbReference type="UniPathway" id="UPA00035">
    <property type="reaction ID" value="UER00044"/>
</dbReference>
<dbReference type="Proteomes" id="UP000001024">
    <property type="component" value="Chromosome"/>
</dbReference>
<dbReference type="GO" id="GO:0005737">
    <property type="term" value="C:cytoplasm"/>
    <property type="evidence" value="ECO:0007669"/>
    <property type="project" value="TreeGrafter"/>
</dbReference>
<dbReference type="GO" id="GO:0052684">
    <property type="term" value="F:L-serine hydro-lyase (adding indole, L-tryptophan-forming) activity"/>
    <property type="evidence" value="ECO:0007669"/>
    <property type="project" value="TreeGrafter"/>
</dbReference>
<dbReference type="GO" id="GO:0030170">
    <property type="term" value="F:pyridoxal phosphate binding"/>
    <property type="evidence" value="ECO:0007669"/>
    <property type="project" value="InterPro"/>
</dbReference>
<dbReference type="GO" id="GO:0004834">
    <property type="term" value="F:tryptophan synthase activity"/>
    <property type="evidence" value="ECO:0007669"/>
    <property type="project" value="UniProtKB-UniRule"/>
</dbReference>
<dbReference type="Gene3D" id="3.40.50.1100">
    <property type="match status" value="2"/>
</dbReference>
<dbReference type="HAMAP" id="MF_00133">
    <property type="entry name" value="Trp_synth_beta"/>
    <property type="match status" value="1"/>
</dbReference>
<dbReference type="InterPro" id="IPR006316">
    <property type="entry name" value="Trp_synth_b-like"/>
</dbReference>
<dbReference type="InterPro" id="IPR006653">
    <property type="entry name" value="Trp_synth_b_CS"/>
</dbReference>
<dbReference type="InterPro" id="IPR023026">
    <property type="entry name" value="Trp_synth_beta/beta-like"/>
</dbReference>
<dbReference type="InterPro" id="IPR001926">
    <property type="entry name" value="TrpB-like_PALP"/>
</dbReference>
<dbReference type="InterPro" id="IPR036052">
    <property type="entry name" value="TrpB-like_PALP_sf"/>
</dbReference>
<dbReference type="NCBIfam" id="NF009057">
    <property type="entry name" value="PRK12391.1"/>
    <property type="match status" value="1"/>
</dbReference>
<dbReference type="NCBIfam" id="TIGR01415">
    <property type="entry name" value="trpB_rel"/>
    <property type="match status" value="1"/>
</dbReference>
<dbReference type="PANTHER" id="PTHR48077:SF6">
    <property type="entry name" value="TRYPTOPHAN SYNTHASE"/>
    <property type="match status" value="1"/>
</dbReference>
<dbReference type="PANTHER" id="PTHR48077">
    <property type="entry name" value="TRYPTOPHAN SYNTHASE-RELATED"/>
    <property type="match status" value="1"/>
</dbReference>
<dbReference type="Pfam" id="PF00291">
    <property type="entry name" value="PALP"/>
    <property type="match status" value="1"/>
</dbReference>
<dbReference type="PIRSF" id="PIRSF001413">
    <property type="entry name" value="Trp_syn_beta"/>
    <property type="match status" value="1"/>
</dbReference>
<dbReference type="PIRSF" id="PIRSF500824">
    <property type="entry name" value="TrpB_prok"/>
    <property type="match status" value="1"/>
</dbReference>
<dbReference type="SUPFAM" id="SSF53686">
    <property type="entry name" value="Tryptophan synthase beta subunit-like PLP-dependent enzymes"/>
    <property type="match status" value="1"/>
</dbReference>
<dbReference type="PROSITE" id="PS00168">
    <property type="entry name" value="TRP_SYNTHASE_BETA"/>
    <property type="match status" value="1"/>
</dbReference>
<accession>Q9HKD2</accession>
<name>TRPB_THEAC</name>
<sequence>MIRIDLKQDEMPDHWYNILPDLPEELPTPRDETGEAFDTLKKAVPAKVLEYEFSGERYPKIPDEILERYMQVGRPTPIIRAKKLEELLGGNLKIFLKMESYTYSGSHKINSALAHVFFAREEGAKFVSTETGAGQWGSAVALASALFHMESHIFMVRTSFYAKPYRKYMMYMYGAHPHPSPSEFTEYGREVLKRMPDTPGSLGLAISEAIHYALDNGGKYIAGSVINSDILFKTIAGMEAKKQMEMAGEDPDYIVGVVGGGSNYAALAFPFLADELSSGKIRRTYIASGSKEVPKMTEGEYRYDYPDTGKVLPLLKMYTIGYDFIPPAVYAGGLRYHAVAPTLSLLMNKGIVSARDYDQEEAFKWARIFSETEGYIPAPETSHALPILKEIADKNRGEKKTVLVSFSGHGLLDLGNYAEALHFE</sequence>
<keyword id="KW-0028">Amino-acid biosynthesis</keyword>
<keyword id="KW-0057">Aromatic amino acid biosynthesis</keyword>
<keyword id="KW-0456">Lyase</keyword>
<keyword id="KW-0663">Pyridoxal phosphate</keyword>
<keyword id="KW-1185">Reference proteome</keyword>
<keyword id="KW-0822">Tryptophan biosynthesis</keyword>